<dbReference type="EMBL" id="AC009525">
    <property type="protein sequence ID" value="AAF02876.1"/>
    <property type="molecule type" value="Genomic_DNA"/>
</dbReference>
<dbReference type="EMBL" id="CP002684">
    <property type="protein sequence ID" value="AEE27494.1"/>
    <property type="molecule type" value="Genomic_DNA"/>
</dbReference>
<dbReference type="EMBL" id="BT010174">
    <property type="protein sequence ID" value="AAQ22643.1"/>
    <property type="molecule type" value="mRNA"/>
</dbReference>
<dbReference type="PIR" id="D86159">
    <property type="entry name" value="D86159"/>
</dbReference>
<dbReference type="RefSeq" id="NP_171789.1">
    <property type="nucleotide sequence ID" value="NM_100171.3"/>
</dbReference>
<dbReference type="BioGRID" id="24624">
    <property type="interactions" value="1"/>
</dbReference>
<dbReference type="DIP" id="DIP-61428N"/>
<dbReference type="FunCoup" id="Q9SRY3">
    <property type="interactions" value="91"/>
</dbReference>
<dbReference type="IntAct" id="Q9SRY3">
    <property type="interactions" value="1"/>
</dbReference>
<dbReference type="STRING" id="3702.Q9SRY3"/>
<dbReference type="GlyCosmos" id="Q9SRY3">
    <property type="glycosylation" value="1 site, No reported glycans"/>
</dbReference>
<dbReference type="GlyGen" id="Q9SRY3">
    <property type="glycosylation" value="1 site"/>
</dbReference>
<dbReference type="PaxDb" id="3702-AT1G02900.1"/>
<dbReference type="ProteomicsDB" id="228004"/>
<dbReference type="EnsemblPlants" id="AT1G02900.1">
    <property type="protein sequence ID" value="AT1G02900.1"/>
    <property type="gene ID" value="AT1G02900"/>
</dbReference>
<dbReference type="GeneID" id="839389"/>
<dbReference type="Gramene" id="AT1G02900.1">
    <property type="protein sequence ID" value="AT1G02900.1"/>
    <property type="gene ID" value="AT1G02900"/>
</dbReference>
<dbReference type="KEGG" id="ath:AT1G02900"/>
<dbReference type="Araport" id="AT1G02900"/>
<dbReference type="TAIR" id="AT1G02900">
    <property type="gene designation" value="RALF1"/>
</dbReference>
<dbReference type="eggNOG" id="ENOG502S1TF">
    <property type="taxonomic scope" value="Eukaryota"/>
</dbReference>
<dbReference type="HOGENOM" id="CLU_127895_1_2_1"/>
<dbReference type="InParanoid" id="Q9SRY3"/>
<dbReference type="OMA" id="WIPTIRS"/>
<dbReference type="OrthoDB" id="1613518at2759"/>
<dbReference type="PhylomeDB" id="Q9SRY3"/>
<dbReference type="PRO" id="PR:Q9SRY3"/>
<dbReference type="Proteomes" id="UP000006548">
    <property type="component" value="Chromosome 1"/>
</dbReference>
<dbReference type="ExpressionAtlas" id="Q9SRY3">
    <property type="expression patterns" value="baseline and differential"/>
</dbReference>
<dbReference type="GO" id="GO:0048046">
    <property type="term" value="C:apoplast"/>
    <property type="evidence" value="ECO:0000250"/>
    <property type="project" value="TAIR"/>
</dbReference>
<dbReference type="GO" id="GO:0005179">
    <property type="term" value="F:hormone activity"/>
    <property type="evidence" value="ECO:0000250"/>
    <property type="project" value="UniProtKB"/>
</dbReference>
<dbReference type="GO" id="GO:0019722">
    <property type="term" value="P:calcium-mediated signaling"/>
    <property type="evidence" value="ECO:0000314"/>
    <property type="project" value="TAIR"/>
</dbReference>
<dbReference type="GO" id="GO:0007267">
    <property type="term" value="P:cell-cell signaling"/>
    <property type="evidence" value="ECO:0000250"/>
    <property type="project" value="TAIR"/>
</dbReference>
<dbReference type="GO" id="GO:0030308">
    <property type="term" value="P:negative regulation of cell growth"/>
    <property type="evidence" value="ECO:0000314"/>
    <property type="project" value="UniProtKB"/>
</dbReference>
<dbReference type="GO" id="GO:0048364">
    <property type="term" value="P:root development"/>
    <property type="evidence" value="ECO:0000315"/>
    <property type="project" value="UniProtKB"/>
</dbReference>
<dbReference type="InterPro" id="IPR008801">
    <property type="entry name" value="RALF"/>
</dbReference>
<dbReference type="PANTHER" id="PTHR33136:SF109">
    <property type="entry name" value="PROTEIN RALF-LIKE 1"/>
    <property type="match status" value="1"/>
</dbReference>
<dbReference type="PANTHER" id="PTHR33136">
    <property type="entry name" value="RAPID ALKALINIZATION FACTOR-LIKE"/>
    <property type="match status" value="1"/>
</dbReference>
<dbReference type="Pfam" id="PF05498">
    <property type="entry name" value="RALF"/>
    <property type="match status" value="1"/>
</dbReference>
<keyword id="KW-0903">Direct protein sequencing</keyword>
<keyword id="KW-1015">Disulfide bond</keyword>
<keyword id="KW-0325">Glycoprotein</keyword>
<keyword id="KW-0372">Hormone</keyword>
<keyword id="KW-1185">Reference proteome</keyword>
<keyword id="KW-0964">Secreted</keyword>
<keyword id="KW-0732">Signal</keyword>
<feature type="signal peptide" evidence="2">
    <location>
        <begin position="1"/>
        <end position="26"/>
    </location>
</feature>
<feature type="propeptide" id="PRO_0000420290" description="Removed in mature form">
    <location>
        <begin position="27"/>
        <end position="71"/>
    </location>
</feature>
<feature type="chain" id="PRO_0000420291" description="Protein RALF-like 1">
    <location>
        <begin position="72"/>
        <end position="120"/>
    </location>
</feature>
<feature type="site" description="Required for proteolytic cleavage">
    <location>
        <begin position="68"/>
        <end position="69"/>
    </location>
</feature>
<feature type="glycosylation site" description="N-linked (GlcNAc...) asparagine" evidence="2">
    <location>
        <position position="43"/>
    </location>
</feature>
<feature type="disulfide bond" evidence="1">
    <location>
        <begin position="89"/>
        <end position="99"/>
    </location>
</feature>
<feature type="disulfide bond" evidence="1">
    <location>
        <begin position="112"/>
        <end position="118"/>
    </location>
</feature>
<feature type="mutagenesis site" description="Loss of propeptide cleavage by kexin-like convertase leading to an impaired activity." evidence="4">
    <original>R</original>
    <variation>A</variation>
    <location>
        <position position="69"/>
    </location>
</feature>
<organism>
    <name type="scientific">Arabidopsis thaliana</name>
    <name type="common">Mouse-ear cress</name>
    <dbReference type="NCBI Taxonomy" id="3702"/>
    <lineage>
        <taxon>Eukaryota</taxon>
        <taxon>Viridiplantae</taxon>
        <taxon>Streptophyta</taxon>
        <taxon>Embryophyta</taxon>
        <taxon>Tracheophyta</taxon>
        <taxon>Spermatophyta</taxon>
        <taxon>Magnoliopsida</taxon>
        <taxon>eudicotyledons</taxon>
        <taxon>Gunneridae</taxon>
        <taxon>Pentapetalae</taxon>
        <taxon>rosids</taxon>
        <taxon>malvids</taxon>
        <taxon>Brassicales</taxon>
        <taxon>Brassicaceae</taxon>
        <taxon>Camelineae</taxon>
        <taxon>Arabidopsis</taxon>
    </lineage>
</organism>
<comment type="function">
    <text evidence="3 4 5">Cell signaling peptide that may regulate plant stress, growth, and development. Mediates a rapid alkalinization of extracellular space by mediating a transient increase in the cytoplasmic Ca(2+) concentration leading to a calcium-dependent signaling events through a cell surface receptor and a concomitant activation of some intracellular mitogen-activated protein kinases. Mostly active in roots. Prevents plant growth (e.g. root and leaf length). Suppresses cell elongation of the primary root by activating the cell surface receptor FER and triggering phosphorylation of AHA2 and subsequent extracellular alkalinization.</text>
</comment>
<comment type="subunit">
    <text evidence="5">Interacts with FER and promotes its phosphorylation and subsequent activation.</text>
</comment>
<comment type="interaction">
    <interactant intactId="EBI-16091545">
        <id>Q9SRY3</id>
    </interactant>
    <interactant intactId="EBI-15880405">
        <id>Q9SCZ4</id>
        <label>FER</label>
    </interactant>
    <organismsDiffer>false</organismsDiffer>
    <experiments>3</experiments>
</comment>
<comment type="subcellular location">
    <subcellularLocation>
        <location evidence="6">Secreted</location>
    </subcellularLocation>
</comment>
<comment type="tissue specificity">
    <text evidence="3">Expressed in roots and stems.</text>
</comment>
<comment type="developmental stage">
    <text evidence="3">First detected in the root hair zone of seedlings, mostly in the vascular bundles, cortex, and endodermis. Later observed in hypocotyls and veins of cotyledons.</text>
</comment>
<comment type="induction">
    <text evidence="3">More efficient to mediate cytoplasmic Ca(2+) accumulation when oxidized, but inactive when reduced.</text>
</comment>
<comment type="PTM">
    <text evidence="4">Proteolytically cleaved, probably by S1P, a subtilisin-like serine protease (subtilase).</text>
</comment>
<comment type="disruption phenotype">
    <text evidence="5">Longer roots.</text>
</comment>
<comment type="similarity">
    <text evidence="6">Belongs to the plant rapid alkalinization factor (RALF) family.</text>
</comment>
<evidence type="ECO:0000250" key="1"/>
<evidence type="ECO:0000255" key="2"/>
<evidence type="ECO:0000269" key="3">
    <source>
    </source>
</evidence>
<evidence type="ECO:0000269" key="4">
    <source>
    </source>
</evidence>
<evidence type="ECO:0000269" key="5">
    <source>
    </source>
</evidence>
<evidence type="ECO:0000305" key="6"/>
<name>RLF1_ARATH</name>
<accession>Q9SRY3</accession>
<sequence>MDKSFTLFLTLTILVVFIISSPPVQAGFANDLGGVAWATTGDNGSGCHGSIAECIGAEEEEMDSEINRRILATTKYISYQSLKRNSVPCSRRGASYYNCQNGAQANPYSRGCSKIARCRS</sequence>
<gene>
    <name type="primary">RALF1</name>
    <name type="synonym">RALFL1</name>
    <name type="ordered locus">At1g02900</name>
    <name type="ORF">F22D16.10</name>
</gene>
<reference key="1">
    <citation type="journal article" date="2000" name="Nature">
        <title>Sequence and analysis of chromosome 1 of the plant Arabidopsis thaliana.</title>
        <authorList>
            <person name="Theologis A."/>
            <person name="Ecker J.R."/>
            <person name="Palm C.J."/>
            <person name="Federspiel N.A."/>
            <person name="Kaul S."/>
            <person name="White O."/>
            <person name="Alonso J."/>
            <person name="Altafi H."/>
            <person name="Araujo R."/>
            <person name="Bowman C.L."/>
            <person name="Brooks S.Y."/>
            <person name="Buehler E."/>
            <person name="Chan A."/>
            <person name="Chao Q."/>
            <person name="Chen H."/>
            <person name="Cheuk R.F."/>
            <person name="Chin C.W."/>
            <person name="Chung M.K."/>
            <person name="Conn L."/>
            <person name="Conway A.B."/>
            <person name="Conway A.R."/>
            <person name="Creasy T.H."/>
            <person name="Dewar K."/>
            <person name="Dunn P."/>
            <person name="Etgu P."/>
            <person name="Feldblyum T.V."/>
            <person name="Feng J.-D."/>
            <person name="Fong B."/>
            <person name="Fujii C.Y."/>
            <person name="Gill J.E."/>
            <person name="Goldsmith A.D."/>
            <person name="Haas B."/>
            <person name="Hansen N.F."/>
            <person name="Hughes B."/>
            <person name="Huizar L."/>
            <person name="Hunter J.L."/>
            <person name="Jenkins J."/>
            <person name="Johnson-Hopson C."/>
            <person name="Khan S."/>
            <person name="Khaykin E."/>
            <person name="Kim C.J."/>
            <person name="Koo H.L."/>
            <person name="Kremenetskaia I."/>
            <person name="Kurtz D.B."/>
            <person name="Kwan A."/>
            <person name="Lam B."/>
            <person name="Langin-Hooper S."/>
            <person name="Lee A."/>
            <person name="Lee J.M."/>
            <person name="Lenz C.A."/>
            <person name="Li J.H."/>
            <person name="Li Y.-P."/>
            <person name="Lin X."/>
            <person name="Liu S.X."/>
            <person name="Liu Z.A."/>
            <person name="Luros J.S."/>
            <person name="Maiti R."/>
            <person name="Marziali A."/>
            <person name="Militscher J."/>
            <person name="Miranda M."/>
            <person name="Nguyen M."/>
            <person name="Nierman W.C."/>
            <person name="Osborne B.I."/>
            <person name="Pai G."/>
            <person name="Peterson J."/>
            <person name="Pham P.K."/>
            <person name="Rizzo M."/>
            <person name="Rooney T."/>
            <person name="Rowley D."/>
            <person name="Sakano H."/>
            <person name="Salzberg S.L."/>
            <person name="Schwartz J.R."/>
            <person name="Shinn P."/>
            <person name="Southwick A.M."/>
            <person name="Sun H."/>
            <person name="Tallon L.J."/>
            <person name="Tambunga G."/>
            <person name="Toriumi M.J."/>
            <person name="Town C.D."/>
            <person name="Utterback T."/>
            <person name="Van Aken S."/>
            <person name="Vaysberg M."/>
            <person name="Vysotskaia V.S."/>
            <person name="Walker M."/>
            <person name="Wu D."/>
            <person name="Yu G."/>
            <person name="Fraser C.M."/>
            <person name="Venter J.C."/>
            <person name="Davis R.W."/>
        </authorList>
    </citation>
    <scope>NUCLEOTIDE SEQUENCE [LARGE SCALE GENOMIC DNA]</scope>
    <source>
        <strain>cv. Columbia</strain>
    </source>
</reference>
<reference key="2">
    <citation type="journal article" date="2017" name="Plant J.">
        <title>Araport11: a complete reannotation of the Arabidopsis thaliana reference genome.</title>
        <authorList>
            <person name="Cheng C.Y."/>
            <person name="Krishnakumar V."/>
            <person name="Chan A.P."/>
            <person name="Thibaud-Nissen F."/>
            <person name="Schobel S."/>
            <person name="Town C.D."/>
        </authorList>
    </citation>
    <scope>GENOME REANNOTATION</scope>
    <source>
        <strain>cv. Columbia</strain>
    </source>
</reference>
<reference key="3">
    <citation type="journal article" date="2003" name="Science">
        <title>Empirical analysis of transcriptional activity in the Arabidopsis genome.</title>
        <authorList>
            <person name="Yamada K."/>
            <person name="Lim J."/>
            <person name="Dale J.M."/>
            <person name="Chen H."/>
            <person name="Shinn P."/>
            <person name="Palm C.J."/>
            <person name="Southwick A.M."/>
            <person name="Wu H.C."/>
            <person name="Kim C.J."/>
            <person name="Nguyen M."/>
            <person name="Pham P.K."/>
            <person name="Cheuk R.F."/>
            <person name="Karlin-Newmann G."/>
            <person name="Liu S.X."/>
            <person name="Lam B."/>
            <person name="Sakano H."/>
            <person name="Wu T."/>
            <person name="Yu G."/>
            <person name="Miranda M."/>
            <person name="Quach H.L."/>
            <person name="Tripp M."/>
            <person name="Chang C.H."/>
            <person name="Lee J.M."/>
            <person name="Toriumi M.J."/>
            <person name="Chan M.M."/>
            <person name="Tang C.C."/>
            <person name="Onodera C.S."/>
            <person name="Deng J.M."/>
            <person name="Akiyama K."/>
            <person name="Ansari Y."/>
            <person name="Arakawa T."/>
            <person name="Banh J."/>
            <person name="Banno F."/>
            <person name="Bowser L."/>
            <person name="Brooks S.Y."/>
            <person name="Carninci P."/>
            <person name="Chao Q."/>
            <person name="Choy N."/>
            <person name="Enju A."/>
            <person name="Goldsmith A.D."/>
            <person name="Gurjal M."/>
            <person name="Hansen N.F."/>
            <person name="Hayashizaki Y."/>
            <person name="Johnson-Hopson C."/>
            <person name="Hsuan V.W."/>
            <person name="Iida K."/>
            <person name="Karnes M."/>
            <person name="Khan S."/>
            <person name="Koesema E."/>
            <person name="Ishida J."/>
            <person name="Jiang P.X."/>
            <person name="Jones T."/>
            <person name="Kawai J."/>
            <person name="Kamiya A."/>
            <person name="Meyers C."/>
            <person name="Nakajima M."/>
            <person name="Narusaka M."/>
            <person name="Seki M."/>
            <person name="Sakurai T."/>
            <person name="Satou M."/>
            <person name="Tamse R."/>
            <person name="Vaysberg M."/>
            <person name="Wallender E.K."/>
            <person name="Wong C."/>
            <person name="Yamamura Y."/>
            <person name="Yuan S."/>
            <person name="Shinozaki K."/>
            <person name="Davis R.W."/>
            <person name="Theologis A."/>
            <person name="Ecker J.R."/>
        </authorList>
    </citation>
    <scope>NUCLEOTIDE SEQUENCE [LARGE SCALE MRNA]</scope>
    <source>
        <strain>cv. Columbia</strain>
    </source>
</reference>
<reference key="4">
    <citation type="journal article" date="2008" name="Biochemistry">
        <title>A cytoplasmic Ca2+ functional assay for identifying and purifying endogenous cell signaling peptides in Arabidopsis seedlings: identification of AtRALF1 peptide.</title>
        <authorList>
            <person name="Haruta M."/>
            <person name="Monshausen G."/>
            <person name="Gilroy S."/>
            <person name="Sussman M.R."/>
        </authorList>
    </citation>
    <scope>PROTEIN SEQUENCE OF 76-84</scope>
    <scope>FUNCTION</scope>
    <scope>IDENTIFICATION BY MASS SPECTROMETRY</scope>
    <scope>TISSUE SPECIFICITY</scope>
    <scope>DEVELOPMENTAL STAGE</scope>
    <scope>INDUCTION BY OXIDATION</scope>
    <source>
        <strain>cv. Wassilewskija</strain>
    </source>
</reference>
<reference key="5">
    <citation type="journal article" date="2002" name="In Silico Biol.">
        <title>Peptomics, identification of novel cationic Arabidopsis peptides with conserved sequence motifs.</title>
        <authorList>
            <person name="Olsen A.N."/>
            <person name="Mundy J."/>
            <person name="Skriver K."/>
        </authorList>
    </citation>
    <scope>GENE FAMILY</scope>
    <scope>NOMENCLATURE</scope>
</reference>
<reference key="6">
    <citation type="journal article" date="2008" name="FEBS Lett.">
        <title>A conserved dibasic site is essential for correct processing of the peptide hormone AtRALF1 in Arabidopsis thaliana.</title>
        <authorList>
            <person name="Matos J.L."/>
            <person name="Fiori C.S."/>
            <person name="Silva-Filho M.C."/>
            <person name="Moura D.S."/>
        </authorList>
    </citation>
    <scope>FUNCTION</scope>
    <scope>MUTAGENESIS OF ARG-69</scope>
    <scope>CLEAVAGE BY KEXIN-LIKE CONVERTASE</scope>
    <source>
        <strain>cv. Columbia</strain>
    </source>
</reference>
<reference key="7">
    <citation type="journal article" date="2014" name="Science">
        <title>A peptide hormone and its receptor protein kinase regulate plant cell expansion.</title>
        <authorList>
            <person name="Haruta M."/>
            <person name="Sabat G."/>
            <person name="Stecker K."/>
            <person name="Minkoff B.B."/>
            <person name="Sussman M.R."/>
        </authorList>
    </citation>
    <scope>FUNCTION</scope>
    <scope>DISRUPTION PHENOTYPE</scope>
    <scope>INTERACTION WITH FER</scope>
    <scope>IDENTIFICATION BY MASS SPECTROMETRY</scope>
    <source>
        <strain>cv. Columbia</strain>
    </source>
</reference>
<protein>
    <recommendedName>
        <fullName>Protein RALF-like 1</fullName>
    </recommendedName>
    <alternativeName>
        <fullName>Rapid alkalinization factor 1</fullName>
        <shortName>AtRALF1</shortName>
    </alternativeName>
</protein>
<proteinExistence type="evidence at protein level"/>